<dbReference type="EC" id="1.2.1.41" evidence="1"/>
<dbReference type="EMBL" id="CP000828">
    <property type="protein sequence ID" value="ABW27029.1"/>
    <property type="molecule type" value="Genomic_DNA"/>
</dbReference>
<dbReference type="RefSeq" id="WP_012162525.1">
    <property type="nucleotide sequence ID" value="NC_009925.1"/>
</dbReference>
<dbReference type="SMR" id="B0CFL0"/>
<dbReference type="STRING" id="329726.AM1_2014"/>
<dbReference type="KEGG" id="amr:AM1_2014"/>
<dbReference type="eggNOG" id="COG0014">
    <property type="taxonomic scope" value="Bacteria"/>
</dbReference>
<dbReference type="HOGENOM" id="CLU_030231_0_1_3"/>
<dbReference type="OrthoDB" id="9809970at2"/>
<dbReference type="UniPathway" id="UPA00098">
    <property type="reaction ID" value="UER00360"/>
</dbReference>
<dbReference type="Proteomes" id="UP000000268">
    <property type="component" value="Chromosome"/>
</dbReference>
<dbReference type="GO" id="GO:0005737">
    <property type="term" value="C:cytoplasm"/>
    <property type="evidence" value="ECO:0007669"/>
    <property type="project" value="UniProtKB-SubCell"/>
</dbReference>
<dbReference type="GO" id="GO:0004350">
    <property type="term" value="F:glutamate-5-semialdehyde dehydrogenase activity"/>
    <property type="evidence" value="ECO:0007669"/>
    <property type="project" value="UniProtKB-UniRule"/>
</dbReference>
<dbReference type="GO" id="GO:0050661">
    <property type="term" value="F:NADP binding"/>
    <property type="evidence" value="ECO:0007669"/>
    <property type="project" value="InterPro"/>
</dbReference>
<dbReference type="GO" id="GO:0055129">
    <property type="term" value="P:L-proline biosynthetic process"/>
    <property type="evidence" value="ECO:0007669"/>
    <property type="project" value="UniProtKB-UniRule"/>
</dbReference>
<dbReference type="CDD" id="cd07079">
    <property type="entry name" value="ALDH_F18-19_ProA-GPR"/>
    <property type="match status" value="1"/>
</dbReference>
<dbReference type="FunFam" id="3.40.309.10:FF:000006">
    <property type="entry name" value="Gamma-glutamyl phosphate reductase"/>
    <property type="match status" value="1"/>
</dbReference>
<dbReference type="Gene3D" id="3.40.605.10">
    <property type="entry name" value="Aldehyde Dehydrogenase, Chain A, domain 1"/>
    <property type="match status" value="1"/>
</dbReference>
<dbReference type="Gene3D" id="3.40.309.10">
    <property type="entry name" value="Aldehyde Dehydrogenase, Chain A, domain 2"/>
    <property type="match status" value="1"/>
</dbReference>
<dbReference type="HAMAP" id="MF_00412">
    <property type="entry name" value="ProA"/>
    <property type="match status" value="1"/>
</dbReference>
<dbReference type="InterPro" id="IPR016161">
    <property type="entry name" value="Ald_DH/histidinol_DH"/>
</dbReference>
<dbReference type="InterPro" id="IPR016163">
    <property type="entry name" value="Ald_DH_C"/>
</dbReference>
<dbReference type="InterPro" id="IPR016162">
    <property type="entry name" value="Ald_DH_N"/>
</dbReference>
<dbReference type="InterPro" id="IPR015590">
    <property type="entry name" value="Aldehyde_DH_dom"/>
</dbReference>
<dbReference type="InterPro" id="IPR020593">
    <property type="entry name" value="G-glutamylP_reductase_CS"/>
</dbReference>
<dbReference type="InterPro" id="IPR012134">
    <property type="entry name" value="Glu-5-SA_DH"/>
</dbReference>
<dbReference type="InterPro" id="IPR000965">
    <property type="entry name" value="GPR_dom"/>
</dbReference>
<dbReference type="NCBIfam" id="NF001221">
    <property type="entry name" value="PRK00197.1"/>
    <property type="match status" value="1"/>
</dbReference>
<dbReference type="NCBIfam" id="TIGR00407">
    <property type="entry name" value="proA"/>
    <property type="match status" value="1"/>
</dbReference>
<dbReference type="PANTHER" id="PTHR11063:SF8">
    <property type="entry name" value="DELTA-1-PYRROLINE-5-CARBOXYLATE SYNTHASE"/>
    <property type="match status" value="1"/>
</dbReference>
<dbReference type="PANTHER" id="PTHR11063">
    <property type="entry name" value="GLUTAMATE SEMIALDEHYDE DEHYDROGENASE"/>
    <property type="match status" value="1"/>
</dbReference>
<dbReference type="Pfam" id="PF00171">
    <property type="entry name" value="Aldedh"/>
    <property type="match status" value="1"/>
</dbReference>
<dbReference type="PIRSF" id="PIRSF000151">
    <property type="entry name" value="GPR"/>
    <property type="match status" value="1"/>
</dbReference>
<dbReference type="SUPFAM" id="SSF53720">
    <property type="entry name" value="ALDH-like"/>
    <property type="match status" value="1"/>
</dbReference>
<dbReference type="PROSITE" id="PS01223">
    <property type="entry name" value="PROA"/>
    <property type="match status" value="1"/>
</dbReference>
<evidence type="ECO:0000255" key="1">
    <source>
        <dbReference type="HAMAP-Rule" id="MF_00412"/>
    </source>
</evidence>
<sequence>MTVLTNSLTEVAQQTRQAAIQLAGASTETKNQALEAVAQALEAATPEILEANVQDCQQAKAAGIANALYARLKLDATKLKGAIAGVRSVATLEDPVGTVQLKRELDTDLVLSRVSCPLGVLGVIFEARPDAVMQIAALAMKSGNGVLLKGGQEALHSCQALVKAIHQGLSNTAVSPNVVALLTSREETLELLNLDQDVNLIIPRGSNDFVRFVQENTRIPVLGHAEGICHLYVDQAAKLDQAVEIAVDSKIQYPAACNAVETILVHDAIAPQYLPKLTAALQDNHVKVLGDAKTQAIVDVGPATETDWATEYGDLIVSIKVVASLSDAIAHINQYGSGHTDAIATEDDQAAAVFMNQVDAAGVFHNCSTRFADGFRYGFGAEVGISTQRMPPRGPVGLEGLVTYKYQLKGQGQIVATYAGSDARPFTHKDL</sequence>
<proteinExistence type="inferred from homology"/>
<name>PROA_ACAM1</name>
<gene>
    <name evidence="1" type="primary">proA</name>
    <name type="ordered locus">AM1_2014</name>
</gene>
<feature type="chain" id="PRO_1000080474" description="Gamma-glutamyl phosphate reductase">
    <location>
        <begin position="1"/>
        <end position="431"/>
    </location>
</feature>
<keyword id="KW-0028">Amino-acid biosynthesis</keyword>
<keyword id="KW-0963">Cytoplasm</keyword>
<keyword id="KW-0521">NADP</keyword>
<keyword id="KW-0560">Oxidoreductase</keyword>
<keyword id="KW-0641">Proline biosynthesis</keyword>
<keyword id="KW-1185">Reference proteome</keyword>
<reference key="1">
    <citation type="journal article" date="2008" name="Proc. Natl. Acad. Sci. U.S.A.">
        <title>Niche adaptation and genome expansion in the chlorophyll d-producing cyanobacterium Acaryochloris marina.</title>
        <authorList>
            <person name="Swingley W.D."/>
            <person name="Chen M."/>
            <person name="Cheung P.C."/>
            <person name="Conrad A.L."/>
            <person name="Dejesa L.C."/>
            <person name="Hao J."/>
            <person name="Honchak B.M."/>
            <person name="Karbach L.E."/>
            <person name="Kurdoglu A."/>
            <person name="Lahiri S."/>
            <person name="Mastrian S.D."/>
            <person name="Miyashita H."/>
            <person name="Page L."/>
            <person name="Ramakrishna P."/>
            <person name="Satoh S."/>
            <person name="Sattley W.M."/>
            <person name="Shimada Y."/>
            <person name="Taylor H.L."/>
            <person name="Tomo T."/>
            <person name="Tsuchiya T."/>
            <person name="Wang Z.T."/>
            <person name="Raymond J."/>
            <person name="Mimuro M."/>
            <person name="Blankenship R.E."/>
            <person name="Touchman J.W."/>
        </authorList>
    </citation>
    <scope>NUCLEOTIDE SEQUENCE [LARGE SCALE GENOMIC DNA]</scope>
    <source>
        <strain>MBIC 11017</strain>
    </source>
</reference>
<comment type="function">
    <text evidence="1">Catalyzes the NADPH-dependent reduction of L-glutamate 5-phosphate into L-glutamate 5-semialdehyde and phosphate. The product spontaneously undergoes cyclization to form 1-pyrroline-5-carboxylate.</text>
</comment>
<comment type="catalytic activity">
    <reaction evidence="1">
        <text>L-glutamate 5-semialdehyde + phosphate + NADP(+) = L-glutamyl 5-phosphate + NADPH + H(+)</text>
        <dbReference type="Rhea" id="RHEA:19541"/>
        <dbReference type="ChEBI" id="CHEBI:15378"/>
        <dbReference type="ChEBI" id="CHEBI:43474"/>
        <dbReference type="ChEBI" id="CHEBI:57783"/>
        <dbReference type="ChEBI" id="CHEBI:58066"/>
        <dbReference type="ChEBI" id="CHEBI:58274"/>
        <dbReference type="ChEBI" id="CHEBI:58349"/>
        <dbReference type="EC" id="1.2.1.41"/>
    </reaction>
</comment>
<comment type="pathway">
    <text evidence="1">Amino-acid biosynthesis; L-proline biosynthesis; L-glutamate 5-semialdehyde from L-glutamate: step 2/2.</text>
</comment>
<comment type="subcellular location">
    <subcellularLocation>
        <location evidence="1">Cytoplasm</location>
    </subcellularLocation>
</comment>
<comment type="similarity">
    <text evidence="1">Belongs to the gamma-glutamyl phosphate reductase family.</text>
</comment>
<protein>
    <recommendedName>
        <fullName evidence="1">Gamma-glutamyl phosphate reductase</fullName>
        <shortName evidence="1">GPR</shortName>
        <ecNumber evidence="1">1.2.1.41</ecNumber>
    </recommendedName>
    <alternativeName>
        <fullName evidence="1">Glutamate-5-semialdehyde dehydrogenase</fullName>
    </alternativeName>
    <alternativeName>
        <fullName evidence="1">Glutamyl-gamma-semialdehyde dehydrogenase</fullName>
        <shortName evidence="1">GSA dehydrogenase</shortName>
    </alternativeName>
</protein>
<organism>
    <name type="scientific">Acaryochloris marina (strain MBIC 11017)</name>
    <dbReference type="NCBI Taxonomy" id="329726"/>
    <lineage>
        <taxon>Bacteria</taxon>
        <taxon>Bacillati</taxon>
        <taxon>Cyanobacteriota</taxon>
        <taxon>Cyanophyceae</taxon>
        <taxon>Acaryochloridales</taxon>
        <taxon>Acaryochloridaceae</taxon>
        <taxon>Acaryochloris</taxon>
    </lineage>
</organism>
<accession>B0CFL0</accession>